<gene>
    <name evidence="1" type="primary">rpsS</name>
    <name type="ordered locus">AFE_0331</name>
</gene>
<evidence type="ECO:0000255" key="1">
    <source>
        <dbReference type="HAMAP-Rule" id="MF_00531"/>
    </source>
</evidence>
<evidence type="ECO:0000256" key="2">
    <source>
        <dbReference type="SAM" id="MobiDB-lite"/>
    </source>
</evidence>
<evidence type="ECO:0000305" key="3"/>
<protein>
    <recommendedName>
        <fullName evidence="1">Small ribosomal subunit protein uS19</fullName>
    </recommendedName>
    <alternativeName>
        <fullName evidence="3">30S ribosomal protein S19</fullName>
    </alternativeName>
</protein>
<organism>
    <name type="scientific">Acidithiobacillus ferrooxidans (strain ATCC 23270 / DSM 14882 / CIP 104768 / NCIMB 8455)</name>
    <name type="common">Ferrobacillus ferrooxidans (strain ATCC 23270)</name>
    <dbReference type="NCBI Taxonomy" id="243159"/>
    <lineage>
        <taxon>Bacteria</taxon>
        <taxon>Pseudomonadati</taxon>
        <taxon>Pseudomonadota</taxon>
        <taxon>Acidithiobacillia</taxon>
        <taxon>Acidithiobacillales</taxon>
        <taxon>Acidithiobacillaceae</taxon>
        <taxon>Acidithiobacillus</taxon>
    </lineage>
</organism>
<comment type="function">
    <text evidence="1">Protein S19 forms a complex with S13 that binds strongly to the 16S ribosomal RNA.</text>
</comment>
<comment type="similarity">
    <text evidence="1">Belongs to the universal ribosomal protein uS19 family.</text>
</comment>
<sequence length="91" mass="10327">MPRSIKKGPFIDEHLDRKVQSAQASNSRRPIKTWSRRSTITPDFIGLTISVHNGRQHIPVVVNENMVGHKLGEFALTRTFKGHVADKKAKR</sequence>
<reference key="1">
    <citation type="journal article" date="2008" name="BMC Genomics">
        <title>Acidithiobacillus ferrooxidans metabolism: from genome sequence to industrial applications.</title>
        <authorList>
            <person name="Valdes J."/>
            <person name="Pedroso I."/>
            <person name="Quatrini R."/>
            <person name="Dodson R.J."/>
            <person name="Tettelin H."/>
            <person name="Blake R. II"/>
            <person name="Eisen J.A."/>
            <person name="Holmes D.S."/>
        </authorList>
    </citation>
    <scope>NUCLEOTIDE SEQUENCE [LARGE SCALE GENOMIC DNA]</scope>
    <source>
        <strain>ATCC 23270 / DSM 14882 / CIP 104768 / NCIMB 8455</strain>
    </source>
</reference>
<feature type="chain" id="PRO_1000127917" description="Small ribosomal subunit protein uS19">
    <location>
        <begin position="1"/>
        <end position="91"/>
    </location>
</feature>
<feature type="region of interest" description="Disordered" evidence="2">
    <location>
        <begin position="1"/>
        <end position="32"/>
    </location>
</feature>
<feature type="compositionally biased region" description="Basic and acidic residues" evidence="2">
    <location>
        <begin position="9"/>
        <end position="19"/>
    </location>
</feature>
<keyword id="KW-1185">Reference proteome</keyword>
<keyword id="KW-0687">Ribonucleoprotein</keyword>
<keyword id="KW-0689">Ribosomal protein</keyword>
<keyword id="KW-0694">RNA-binding</keyword>
<keyword id="KW-0699">rRNA-binding</keyword>
<dbReference type="EMBL" id="CP001219">
    <property type="protein sequence ID" value="ACK78750.1"/>
    <property type="molecule type" value="Genomic_DNA"/>
</dbReference>
<dbReference type="RefSeq" id="WP_009565435.1">
    <property type="nucleotide sequence ID" value="NC_011761.1"/>
</dbReference>
<dbReference type="SMR" id="B7J471"/>
<dbReference type="STRING" id="243159.AFE_0331"/>
<dbReference type="PaxDb" id="243159-AFE_0331"/>
<dbReference type="GeneID" id="65279710"/>
<dbReference type="KEGG" id="afr:AFE_0331"/>
<dbReference type="eggNOG" id="COG0185">
    <property type="taxonomic scope" value="Bacteria"/>
</dbReference>
<dbReference type="HOGENOM" id="CLU_144911_0_1_6"/>
<dbReference type="Proteomes" id="UP000001362">
    <property type="component" value="Chromosome"/>
</dbReference>
<dbReference type="GO" id="GO:0005737">
    <property type="term" value="C:cytoplasm"/>
    <property type="evidence" value="ECO:0007669"/>
    <property type="project" value="UniProtKB-ARBA"/>
</dbReference>
<dbReference type="GO" id="GO:0015935">
    <property type="term" value="C:small ribosomal subunit"/>
    <property type="evidence" value="ECO:0007669"/>
    <property type="project" value="InterPro"/>
</dbReference>
<dbReference type="GO" id="GO:0019843">
    <property type="term" value="F:rRNA binding"/>
    <property type="evidence" value="ECO:0007669"/>
    <property type="project" value="UniProtKB-UniRule"/>
</dbReference>
<dbReference type="GO" id="GO:0003735">
    <property type="term" value="F:structural constituent of ribosome"/>
    <property type="evidence" value="ECO:0007669"/>
    <property type="project" value="InterPro"/>
</dbReference>
<dbReference type="GO" id="GO:0000028">
    <property type="term" value="P:ribosomal small subunit assembly"/>
    <property type="evidence" value="ECO:0007669"/>
    <property type="project" value="TreeGrafter"/>
</dbReference>
<dbReference type="GO" id="GO:0006412">
    <property type="term" value="P:translation"/>
    <property type="evidence" value="ECO:0007669"/>
    <property type="project" value="UniProtKB-UniRule"/>
</dbReference>
<dbReference type="FunFam" id="3.30.860.10:FF:000001">
    <property type="entry name" value="30S ribosomal protein S19"/>
    <property type="match status" value="1"/>
</dbReference>
<dbReference type="Gene3D" id="3.30.860.10">
    <property type="entry name" value="30s Ribosomal Protein S19, Chain A"/>
    <property type="match status" value="1"/>
</dbReference>
<dbReference type="HAMAP" id="MF_00531">
    <property type="entry name" value="Ribosomal_uS19"/>
    <property type="match status" value="1"/>
</dbReference>
<dbReference type="InterPro" id="IPR002222">
    <property type="entry name" value="Ribosomal_uS19"/>
</dbReference>
<dbReference type="InterPro" id="IPR005732">
    <property type="entry name" value="Ribosomal_uS19_bac-type"/>
</dbReference>
<dbReference type="InterPro" id="IPR020934">
    <property type="entry name" value="Ribosomal_uS19_CS"/>
</dbReference>
<dbReference type="InterPro" id="IPR023575">
    <property type="entry name" value="Ribosomal_uS19_SF"/>
</dbReference>
<dbReference type="NCBIfam" id="TIGR01050">
    <property type="entry name" value="rpsS_bact"/>
    <property type="match status" value="1"/>
</dbReference>
<dbReference type="PANTHER" id="PTHR11880">
    <property type="entry name" value="RIBOSOMAL PROTEIN S19P FAMILY MEMBER"/>
    <property type="match status" value="1"/>
</dbReference>
<dbReference type="PANTHER" id="PTHR11880:SF8">
    <property type="entry name" value="SMALL RIBOSOMAL SUBUNIT PROTEIN US19M"/>
    <property type="match status" value="1"/>
</dbReference>
<dbReference type="Pfam" id="PF00203">
    <property type="entry name" value="Ribosomal_S19"/>
    <property type="match status" value="1"/>
</dbReference>
<dbReference type="PIRSF" id="PIRSF002144">
    <property type="entry name" value="Ribosomal_S19"/>
    <property type="match status" value="1"/>
</dbReference>
<dbReference type="PRINTS" id="PR00975">
    <property type="entry name" value="RIBOSOMALS19"/>
</dbReference>
<dbReference type="SUPFAM" id="SSF54570">
    <property type="entry name" value="Ribosomal protein S19"/>
    <property type="match status" value="1"/>
</dbReference>
<dbReference type="PROSITE" id="PS00323">
    <property type="entry name" value="RIBOSOMAL_S19"/>
    <property type="match status" value="1"/>
</dbReference>
<name>RS19_ACIF2</name>
<proteinExistence type="inferred from homology"/>
<accession>B7J471</accession>